<organism>
    <name type="scientific">Pongo abelii</name>
    <name type="common">Sumatran orangutan</name>
    <name type="synonym">Pongo pygmaeus abelii</name>
    <dbReference type="NCBI Taxonomy" id="9601"/>
    <lineage>
        <taxon>Eukaryota</taxon>
        <taxon>Metazoa</taxon>
        <taxon>Chordata</taxon>
        <taxon>Craniata</taxon>
        <taxon>Vertebrata</taxon>
        <taxon>Euteleostomi</taxon>
        <taxon>Mammalia</taxon>
        <taxon>Eutheria</taxon>
        <taxon>Euarchontoglires</taxon>
        <taxon>Primates</taxon>
        <taxon>Haplorrhini</taxon>
        <taxon>Catarrhini</taxon>
        <taxon>Hominidae</taxon>
        <taxon>Pongo</taxon>
    </lineage>
</organism>
<feature type="initiator methionine" description="Removed" evidence="2">
    <location>
        <position position="1"/>
    </location>
</feature>
<feature type="chain" id="PRO_0000096851" description="Zinc finger C3HC-type protein 1">
    <location>
        <begin position="2"/>
        <end position="502"/>
    </location>
</feature>
<feature type="zinc finger region" description="C3HC-type">
    <location>
        <begin position="102"/>
        <end position="156"/>
    </location>
</feature>
<feature type="region of interest" description="Disordered" evidence="3">
    <location>
        <begin position="35"/>
        <end position="74"/>
    </location>
</feature>
<feature type="region of interest" description="Disordered" evidence="3">
    <location>
        <begin position="302"/>
        <end position="423"/>
    </location>
</feature>
<feature type="short sequence motif" description="Nuclear localization signal" evidence="1">
    <location>
        <begin position="396"/>
        <end position="402"/>
    </location>
</feature>
<feature type="compositionally biased region" description="Polar residues" evidence="3">
    <location>
        <begin position="50"/>
        <end position="72"/>
    </location>
</feature>
<feature type="compositionally biased region" description="Polar residues" evidence="3">
    <location>
        <begin position="351"/>
        <end position="360"/>
    </location>
</feature>
<feature type="compositionally biased region" description="Low complexity" evidence="3">
    <location>
        <begin position="371"/>
        <end position="380"/>
    </location>
</feature>
<feature type="compositionally biased region" description="Low complexity" evidence="3">
    <location>
        <begin position="407"/>
        <end position="422"/>
    </location>
</feature>
<feature type="modified residue" description="N-acetylalanine" evidence="2">
    <location>
        <position position="2"/>
    </location>
</feature>
<feature type="modified residue" description="Phosphoserine" evidence="2">
    <location>
        <position position="24"/>
    </location>
</feature>
<feature type="modified residue" description="Phosphothreonine" evidence="2">
    <location>
        <position position="28"/>
    </location>
</feature>
<feature type="modified residue" description="Phosphoserine" evidence="2">
    <location>
        <position position="58"/>
    </location>
</feature>
<feature type="modified residue" description="Phosphoserine" evidence="2">
    <location>
        <position position="62"/>
    </location>
</feature>
<feature type="modified residue" description="Phosphothreonine" evidence="2">
    <location>
        <position position="84"/>
    </location>
</feature>
<feature type="modified residue" description="Phosphoserine" evidence="2">
    <location>
        <position position="321"/>
    </location>
</feature>
<feature type="modified residue" description="Phosphoserine" evidence="2">
    <location>
        <position position="329"/>
    </location>
</feature>
<feature type="modified residue" description="Phosphothreonine" evidence="2">
    <location>
        <position position="333"/>
    </location>
</feature>
<feature type="modified residue" description="Phosphoserine" evidence="2">
    <location>
        <position position="338"/>
    </location>
</feature>
<feature type="modified residue" description="Phosphoserine" evidence="2">
    <location>
        <position position="344"/>
    </location>
</feature>
<feature type="modified residue" description="Phosphoserine" evidence="2">
    <location>
        <position position="354"/>
    </location>
</feature>
<feature type="modified residue" description="Phosphoserine" evidence="2">
    <location>
        <position position="359"/>
    </location>
</feature>
<feature type="modified residue" description="Phosphoserine" evidence="2">
    <location>
        <position position="370"/>
    </location>
</feature>
<feature type="modified residue" description="Phosphoserine" evidence="2">
    <location>
        <position position="381"/>
    </location>
</feature>
<feature type="modified residue" description="Phosphothreonine" evidence="2">
    <location>
        <position position="384"/>
    </location>
</feature>
<feature type="modified residue" description="Phosphoserine" evidence="2">
    <location>
        <position position="395"/>
    </location>
</feature>
<feature type="modified residue" description="Phosphoserine" evidence="2">
    <location>
        <position position="407"/>
    </location>
</feature>
<feature type="modified residue" description="Phosphoserine" evidence="2">
    <location>
        <position position="483"/>
    </location>
</feature>
<name>ZC3C1_PONAB</name>
<dbReference type="EMBL" id="CR859639">
    <property type="protein sequence ID" value="CAH91801.1"/>
    <property type="molecule type" value="mRNA"/>
</dbReference>
<dbReference type="RefSeq" id="NP_001127464.1">
    <property type="nucleotide sequence ID" value="NM_001133992.2"/>
</dbReference>
<dbReference type="FunCoup" id="Q5R8V9">
    <property type="interactions" value="2828"/>
</dbReference>
<dbReference type="STRING" id="9601.ENSPPYP00000020193"/>
<dbReference type="GeneID" id="100174537"/>
<dbReference type="KEGG" id="pon:100174537"/>
<dbReference type="CTD" id="51530"/>
<dbReference type="eggNOG" id="KOG4765">
    <property type="taxonomic scope" value="Eukaryota"/>
</dbReference>
<dbReference type="InParanoid" id="Q5R8V9"/>
<dbReference type="OrthoDB" id="614844at2759"/>
<dbReference type="Proteomes" id="UP000001595">
    <property type="component" value="Unplaced"/>
</dbReference>
<dbReference type="GO" id="GO:0005635">
    <property type="term" value="C:nuclear envelope"/>
    <property type="evidence" value="ECO:0007669"/>
    <property type="project" value="UniProtKB-SubCell"/>
</dbReference>
<dbReference type="GO" id="GO:0008270">
    <property type="term" value="F:zinc ion binding"/>
    <property type="evidence" value="ECO:0007669"/>
    <property type="project" value="UniProtKB-KW"/>
</dbReference>
<dbReference type="GO" id="GO:0051301">
    <property type="term" value="P:cell division"/>
    <property type="evidence" value="ECO:0007669"/>
    <property type="project" value="UniProtKB-KW"/>
</dbReference>
<dbReference type="GO" id="GO:0016567">
    <property type="term" value="P:protein ubiquitination"/>
    <property type="evidence" value="ECO:0007669"/>
    <property type="project" value="UniProtKB-UniPathway"/>
</dbReference>
<dbReference type="InterPro" id="IPR013909">
    <property type="entry name" value="NuBaID_C"/>
</dbReference>
<dbReference type="InterPro" id="IPR012935">
    <property type="entry name" value="NuBaID_N"/>
</dbReference>
<dbReference type="PANTHER" id="PTHR15835">
    <property type="entry name" value="NUCLEAR-INTERACTING PARTNER OF ALK"/>
    <property type="match status" value="1"/>
</dbReference>
<dbReference type="PANTHER" id="PTHR15835:SF6">
    <property type="entry name" value="ZINC FINGER C3HC-TYPE PROTEIN 1"/>
    <property type="match status" value="1"/>
</dbReference>
<dbReference type="Pfam" id="PF08600">
    <property type="entry name" value="NuBaID_C"/>
    <property type="match status" value="1"/>
</dbReference>
<dbReference type="Pfam" id="PF07967">
    <property type="entry name" value="zf-C3HC"/>
    <property type="match status" value="1"/>
</dbReference>
<gene>
    <name type="primary">ZC3HC1</name>
    <name type="synonym">NIPA</name>
</gene>
<reference key="1">
    <citation type="submission" date="2004-11" db="EMBL/GenBank/DDBJ databases">
        <authorList>
            <consortium name="The German cDNA consortium"/>
        </authorList>
    </citation>
    <scope>NUCLEOTIDE SEQUENCE [LARGE SCALE MRNA]</scope>
    <source>
        <tissue>Brain cortex</tissue>
    </source>
</reference>
<evidence type="ECO:0000250" key="1"/>
<evidence type="ECO:0000250" key="2">
    <source>
        <dbReference type="UniProtKB" id="Q86WB0"/>
    </source>
</evidence>
<evidence type="ECO:0000256" key="3">
    <source>
        <dbReference type="SAM" id="MobiDB-lite"/>
    </source>
</evidence>
<proteinExistence type="evidence at transcript level"/>
<keyword id="KW-0007">Acetylation</keyword>
<keyword id="KW-0131">Cell cycle</keyword>
<keyword id="KW-0132">Cell division</keyword>
<keyword id="KW-0479">Metal-binding</keyword>
<keyword id="KW-0498">Mitosis</keyword>
<keyword id="KW-0539">Nucleus</keyword>
<keyword id="KW-0597">Phosphoprotein</keyword>
<keyword id="KW-1185">Reference proteome</keyword>
<keyword id="KW-0833">Ubl conjugation pathway</keyword>
<keyword id="KW-0862">Zinc</keyword>
<keyword id="KW-0863">Zinc-finger</keyword>
<accession>Q5R8V9</accession>
<protein>
    <recommendedName>
        <fullName>Zinc finger C3HC-type protein 1</fullName>
    </recommendedName>
    <alternativeName>
        <fullName>Nuclear-interacting partner of ALK</fullName>
    </alternativeName>
    <alternativeName>
        <fullName>Nuclear-interacting partner of anaplastic lymphoma kinase</fullName>
    </alternativeName>
</protein>
<sequence>MAAPCEGQAFAVGVEKNWGAVVRSPEGTPQKIRQLIDEGIAPEEGGVDAQDTSATSQSVNGSPQAEQPSLESTSKEAFFSRVETFSSLKWAGKPPELSPLVCAKYGWVTVECDMLKCSSCQAFLCASLQPAFDFDRYKQRCAELKKALCTAHEKFCFWPDSPSPDRFGMLPLEEPAILVSEFLDRFQSLCHLDLQLPSLRPEDLKTMCLTEDKISLLLHLLEDELDHRTDERKTTTKLGSDIQVHVTACILSVCGWACSSSLEPMQLSLITCSQCMRKVGLWGFQQIESSMTDLDASFGLTSSPIPGLEGRPERLPLVPESPRRMMTRSQDATFFPGSEQAEKSPGPIVSRTRSWDSSSPVDRPEPEAASPTTRTRPVTRSMGTGDPSGLEVPSSPLRKAKRARLCSSSSSDTSSRSFFDPTSQHRDWCPWVNVTLGKESRENGGTEPDASAPAEPGWKAVLTILLAHKQSSQPAETDSMSLSEKSRKVFRIFRQWESLCSC</sequence>
<comment type="function">
    <text evidence="2">Required for proper positioning of a substantial amount of TPR at the nuclear basket (NB) through interaction with TPR.</text>
</comment>
<comment type="subunit">
    <text evidence="2">Interacts with TPR; this interaction mediates ZC3HC1 nuclear envelopes (NE)-association but also required for proper positioning of a substantial amount of TPR at the nuclear basket (NB).</text>
</comment>
<comment type="subcellular location">
    <subcellularLocation>
        <location evidence="2">Nucleus</location>
    </subcellularLocation>
    <subcellularLocation>
        <location evidence="2">Nucleus envelope</location>
    </subcellularLocation>
    <text evidence="2">Resident of the nuclear basket (NB). Occurs at the nuclear envelopes (NE) of all TPR-containing cell types, including proliferating and non-dividing, terminally differentiated cells of different morphogenetic origin.</text>
</comment>
<comment type="PTM">
    <text evidence="2">Phosphorylated. May also be weakly phosphorylated on Tyr residues.</text>
</comment>